<name>YJDM_ECOL6</name>
<reference key="1">
    <citation type="journal article" date="2002" name="Proc. Natl. Acad. Sci. U.S.A.">
        <title>Extensive mosaic structure revealed by the complete genome sequence of uropathogenic Escherichia coli.</title>
        <authorList>
            <person name="Welch R.A."/>
            <person name="Burland V."/>
            <person name="Plunkett G. III"/>
            <person name="Redford P."/>
            <person name="Roesch P."/>
            <person name="Rasko D."/>
            <person name="Buckles E.L."/>
            <person name="Liou S.-R."/>
            <person name="Boutin A."/>
            <person name="Hackett J."/>
            <person name="Stroud D."/>
            <person name="Mayhew G.F."/>
            <person name="Rose D.J."/>
            <person name="Zhou S."/>
            <person name="Schwartz D.C."/>
            <person name="Perna N.T."/>
            <person name="Mobley H.L.T."/>
            <person name="Donnenberg M.S."/>
            <person name="Blattner F.R."/>
        </authorList>
    </citation>
    <scope>NUCLEOTIDE SEQUENCE [LARGE SCALE GENOMIC DNA]</scope>
    <source>
        <strain>CFT073 / ATCC 700928 / UPEC</strain>
    </source>
</reference>
<accession>P0AFJ2</accession>
<accession>P16680</accession>
<sequence length="111" mass="12345">MSLPHCPKCNSEYTYEDNGMYICPECAYEWNDAEPAQESDELIVKDANGNLLADGDSVTIIKDLKVKGSSSMLKIGTKVKNIRLVEGDHNIDCKIDGFGPMKLKSEFVKKN</sequence>
<feature type="chain" id="PRO_0000058384" description="Protein YjdM">
    <location>
        <begin position="1"/>
        <end position="111"/>
    </location>
</feature>
<gene>
    <name type="primary">yjdM</name>
    <name type="synonym">phnA</name>
    <name type="ordered locus">c5113</name>
</gene>
<keyword id="KW-1185">Reference proteome</keyword>
<comment type="similarity">
    <text evidence="1">Belongs to the YjdM family.</text>
</comment>
<comment type="sequence caution" evidence="1">
    <conflict type="erroneous initiation">
        <sequence resource="EMBL-CDS" id="AAN83537"/>
    </conflict>
    <text>Extended N-terminus.</text>
</comment>
<protein>
    <recommendedName>
        <fullName>Protein YjdM</fullName>
    </recommendedName>
</protein>
<evidence type="ECO:0000305" key="1"/>
<proteinExistence type="inferred from homology"/>
<dbReference type="EMBL" id="AE014075">
    <property type="protein sequence ID" value="AAN83537.1"/>
    <property type="status" value="ALT_INIT"/>
    <property type="molecule type" value="Genomic_DNA"/>
</dbReference>
<dbReference type="RefSeq" id="WP_001300891.1">
    <property type="nucleotide sequence ID" value="NZ_CP051263.1"/>
</dbReference>
<dbReference type="SMR" id="P0AFJ2"/>
<dbReference type="STRING" id="199310.c5113"/>
<dbReference type="KEGG" id="ecc:c5113"/>
<dbReference type="eggNOG" id="COG2824">
    <property type="taxonomic scope" value="Bacteria"/>
</dbReference>
<dbReference type="HOGENOM" id="CLU_134486_0_1_6"/>
<dbReference type="Proteomes" id="UP000001410">
    <property type="component" value="Chromosome"/>
</dbReference>
<dbReference type="FunFam" id="2.20.25.10:FF:000003">
    <property type="entry name" value="Alkylphosphonate utilization protein PhnA"/>
    <property type="match status" value="1"/>
</dbReference>
<dbReference type="FunFam" id="2.30.30.40:FF:000013">
    <property type="entry name" value="Alkylphosphonate utilization protein PhnA"/>
    <property type="match status" value="1"/>
</dbReference>
<dbReference type="Gene3D" id="2.20.25.10">
    <property type="match status" value="1"/>
</dbReference>
<dbReference type="Gene3D" id="2.30.30.40">
    <property type="entry name" value="SH3 Domains"/>
    <property type="match status" value="1"/>
</dbReference>
<dbReference type="InterPro" id="IPR004624">
    <property type="entry name" value="YjdM"/>
</dbReference>
<dbReference type="InterPro" id="IPR013988">
    <property type="entry name" value="YjdM_C"/>
</dbReference>
<dbReference type="InterPro" id="IPR013987">
    <property type="entry name" value="YjdM_N"/>
</dbReference>
<dbReference type="NCBIfam" id="TIGR00686">
    <property type="entry name" value="phnA"/>
    <property type="match status" value="1"/>
</dbReference>
<dbReference type="PANTHER" id="PTHR30305:SF3">
    <property type="entry name" value="PROTEIN YJDM"/>
    <property type="match status" value="1"/>
</dbReference>
<dbReference type="PANTHER" id="PTHR30305">
    <property type="entry name" value="PROTEIN YJDM-RELATED"/>
    <property type="match status" value="1"/>
</dbReference>
<dbReference type="Pfam" id="PF03831">
    <property type="entry name" value="YjdM"/>
    <property type="match status" value="1"/>
</dbReference>
<dbReference type="Pfam" id="PF08274">
    <property type="entry name" value="Zn_Ribbon_YjdM"/>
    <property type="match status" value="1"/>
</dbReference>
<dbReference type="SUPFAM" id="SSF82057">
    <property type="entry name" value="Prokaryotic SH3-related domain"/>
    <property type="match status" value="1"/>
</dbReference>
<dbReference type="SUPFAM" id="SSF57783">
    <property type="entry name" value="Zinc beta-ribbon"/>
    <property type="match status" value="1"/>
</dbReference>
<organism>
    <name type="scientific">Escherichia coli O6:H1 (strain CFT073 / ATCC 700928 / UPEC)</name>
    <dbReference type="NCBI Taxonomy" id="199310"/>
    <lineage>
        <taxon>Bacteria</taxon>
        <taxon>Pseudomonadati</taxon>
        <taxon>Pseudomonadota</taxon>
        <taxon>Gammaproteobacteria</taxon>
        <taxon>Enterobacterales</taxon>
        <taxon>Enterobacteriaceae</taxon>
        <taxon>Escherichia</taxon>
    </lineage>
</organism>